<proteinExistence type="inferred from homology"/>
<protein>
    <recommendedName>
        <fullName evidence="2">Fe-S cluster assembly protein DRE2</fullName>
    </recommendedName>
    <alternativeName>
        <fullName evidence="2">Anamorsin homolog</fullName>
    </alternativeName>
</protein>
<sequence>MSQYKTGLLLIHPAVTTTPELVENTKAQAASKKVKFVDQFLINKLNDGSITLENAKYETVHYLTPEAQTDIKFPKKLISVLADSLKPNGSLIGLSDIYKVDALINGFEIINEPDYCWIKMDSSKLNQTVSIPLKKKKTNNTKLQSGSKLPTFKKASSSTSNLPSFKKADHSRQPIVKETDSFKPPSFKMTTEPKVYRVVDDLIEDSDDDDFSSDSSKAQYFDQVDTSDDSIEEEELIDEDGSGKSMITMITCGKSKTKKKKACKDCTCGMKEQEENEINDIRSQQDKVVKFTEDELTEIDFTIDGKKVGGCGSCSLGDAFRCSGCPYLGLPAFKPGQPINLDSISDDL</sequence>
<gene>
    <name evidence="2" type="primary">DRE2</name>
    <name type="ORF">C1Q_05118</name>
</gene>
<comment type="function">
    <text evidence="2">Component of the cytosolic iron-sulfur (Fe-S) protein assembly (CIA) machinery required for the maturation of extramitochondrial Fe-S proteins. Part of an electron transfer chain functioning in an early step of cytosolic Fe-S biogenesis, facilitating the de novo assembly of a [4Fe-4S] cluster on the scaffold complex CFD1-NBP35. Electrons are transferred to DRE2 from NADPH via the FAD- and FMN-containing protein TAH18. TAH18-DRE2 are also required for the assembly of the diferric tyrosyl radical cofactor of ribonucleotide reductase (RNR), probably by providing electrons for reduction during radical cofactor maturation in the catalytic small subunit RNR2.</text>
</comment>
<comment type="cofactor">
    <cofactor evidence="2">
        <name>[2Fe-2S] cluster</name>
        <dbReference type="ChEBI" id="CHEBI:190135"/>
    </cofactor>
</comment>
<comment type="cofactor">
    <cofactor evidence="2">
        <name>[4Fe-4S] cluster</name>
        <dbReference type="ChEBI" id="CHEBI:49883"/>
    </cofactor>
</comment>
<comment type="subunit">
    <text evidence="2">Monomer. Interacts with TAH18. Interacts with MIA40.</text>
</comment>
<comment type="subcellular location">
    <subcellularLocation>
        <location evidence="2">Cytoplasm</location>
    </subcellularLocation>
    <subcellularLocation>
        <location evidence="2">Mitochondrion intermembrane space</location>
    </subcellularLocation>
</comment>
<comment type="domain">
    <text evidence="2">The C-terminal domain binds 2 Fe-S clusters but is otherwise mostly in an intrinsically disordered conformation.</text>
</comment>
<comment type="domain">
    <text evidence="2">The N-terminal domain has structural similarity with S-adenosyl-L-methionine-dependent methyltransferases, but does not bind S-adenosyl-L-methionine. It is required for correct assembly of the 2 Fe-S clusters.</text>
</comment>
<comment type="domain">
    <text evidence="2">The twin Cx2C motifs are involved in the recognition by the mitochondrial MIA40-ERV1 disulfide relay system. The formation of 2 disulfide bonds in the Cx2C motifs through dithiol/disulfide exchange reactions effectively traps the protein in the mitochondrial intermembrane space.</text>
</comment>
<comment type="similarity">
    <text evidence="2">Belongs to the anamorsin family.</text>
</comment>
<organism>
    <name type="scientific">Saccharomyces cerevisiae (strain JAY291)</name>
    <name type="common">Baker's yeast</name>
    <dbReference type="NCBI Taxonomy" id="574961"/>
    <lineage>
        <taxon>Eukaryota</taxon>
        <taxon>Fungi</taxon>
        <taxon>Dikarya</taxon>
        <taxon>Ascomycota</taxon>
        <taxon>Saccharomycotina</taxon>
        <taxon>Saccharomycetes</taxon>
        <taxon>Saccharomycetales</taxon>
        <taxon>Saccharomycetaceae</taxon>
        <taxon>Saccharomyces</taxon>
    </lineage>
</organism>
<evidence type="ECO:0000250" key="1">
    <source>
        <dbReference type="UniProtKB" id="P36152"/>
    </source>
</evidence>
<evidence type="ECO:0000255" key="2">
    <source>
        <dbReference type="HAMAP-Rule" id="MF_03115"/>
    </source>
</evidence>
<evidence type="ECO:0000256" key="3">
    <source>
        <dbReference type="SAM" id="MobiDB-lite"/>
    </source>
</evidence>
<feature type="chain" id="PRO_0000392404" description="Fe-S cluster assembly protein DRE2">
    <location>
        <begin position="1"/>
        <end position="348"/>
    </location>
</feature>
<feature type="region of interest" description="N-terminal SAM-like domain" evidence="2">
    <location>
        <begin position="1"/>
        <end position="162"/>
    </location>
</feature>
<feature type="region of interest" description="Disordered" evidence="3">
    <location>
        <begin position="137"/>
        <end position="170"/>
    </location>
</feature>
<feature type="region of interest" description="Linker" evidence="2">
    <location>
        <begin position="163"/>
        <end position="242"/>
    </location>
</feature>
<feature type="region of interest" description="Fe-S binding site A" evidence="2">
    <location>
        <begin position="252"/>
        <end position="268"/>
    </location>
</feature>
<feature type="region of interest" description="Fe-S binding site B" evidence="2">
    <location>
        <begin position="311"/>
        <end position="325"/>
    </location>
</feature>
<feature type="short sequence motif" description="Cx2C motif 1" evidence="2">
    <location>
        <begin position="311"/>
        <end position="314"/>
    </location>
</feature>
<feature type="short sequence motif" description="Cx2C motif 2" evidence="2">
    <location>
        <begin position="322"/>
        <end position="325"/>
    </location>
</feature>
<feature type="compositionally biased region" description="Polar residues" evidence="3">
    <location>
        <begin position="144"/>
        <end position="163"/>
    </location>
</feature>
<feature type="binding site" evidence="2">
    <location>
        <position position="252"/>
    </location>
    <ligand>
        <name>[2Fe-2S] cluster</name>
        <dbReference type="ChEBI" id="CHEBI:190135"/>
    </ligand>
</feature>
<feature type="binding site" evidence="2">
    <location>
        <position position="263"/>
    </location>
    <ligand>
        <name>[2Fe-2S] cluster</name>
        <dbReference type="ChEBI" id="CHEBI:190135"/>
    </ligand>
</feature>
<feature type="binding site" evidence="2">
    <location>
        <position position="266"/>
    </location>
    <ligand>
        <name>[2Fe-2S] cluster</name>
        <dbReference type="ChEBI" id="CHEBI:190135"/>
    </ligand>
</feature>
<feature type="binding site" evidence="2">
    <location>
        <position position="268"/>
    </location>
    <ligand>
        <name>[2Fe-2S] cluster</name>
        <dbReference type="ChEBI" id="CHEBI:190135"/>
    </ligand>
</feature>
<feature type="binding site" evidence="2">
    <location>
        <position position="311"/>
    </location>
    <ligand>
        <name>[4Fe-4S] cluster</name>
        <dbReference type="ChEBI" id="CHEBI:49883"/>
    </ligand>
</feature>
<feature type="binding site" evidence="2">
    <location>
        <position position="314"/>
    </location>
    <ligand>
        <name>[4Fe-4S] cluster</name>
        <dbReference type="ChEBI" id="CHEBI:49883"/>
    </ligand>
</feature>
<feature type="binding site" evidence="2">
    <location>
        <position position="322"/>
    </location>
    <ligand>
        <name>[4Fe-4S] cluster</name>
        <dbReference type="ChEBI" id="CHEBI:49883"/>
    </ligand>
</feature>
<feature type="binding site" evidence="2">
    <location>
        <position position="325"/>
    </location>
    <ligand>
        <name>[4Fe-4S] cluster</name>
        <dbReference type="ChEBI" id="CHEBI:49883"/>
    </ligand>
</feature>
<feature type="modified residue" description="Phosphoserine" evidence="1">
    <location>
        <position position="206"/>
    </location>
</feature>
<accession>C7GX69</accession>
<dbReference type="EMBL" id="ACFL01000410">
    <property type="protein sequence ID" value="EEU04596.1"/>
    <property type="molecule type" value="Genomic_DNA"/>
</dbReference>
<dbReference type="BMRB" id="C7GX69"/>
<dbReference type="SMR" id="C7GX69"/>
<dbReference type="Proteomes" id="UP000008073">
    <property type="component" value="Unassembled WGS sequence"/>
</dbReference>
<dbReference type="GO" id="GO:0005758">
    <property type="term" value="C:mitochondrial intermembrane space"/>
    <property type="evidence" value="ECO:0007669"/>
    <property type="project" value="UniProtKB-SubCell"/>
</dbReference>
<dbReference type="GO" id="GO:0051537">
    <property type="term" value="F:2 iron, 2 sulfur cluster binding"/>
    <property type="evidence" value="ECO:0007669"/>
    <property type="project" value="UniProtKB-UniRule"/>
</dbReference>
<dbReference type="GO" id="GO:0051539">
    <property type="term" value="F:4 iron, 4 sulfur cluster binding"/>
    <property type="evidence" value="ECO:0007669"/>
    <property type="project" value="UniProtKB-KW"/>
</dbReference>
<dbReference type="GO" id="GO:0009055">
    <property type="term" value="F:electron transfer activity"/>
    <property type="evidence" value="ECO:0007669"/>
    <property type="project" value="UniProtKB-UniRule"/>
</dbReference>
<dbReference type="GO" id="GO:0046872">
    <property type="term" value="F:metal ion binding"/>
    <property type="evidence" value="ECO:0007669"/>
    <property type="project" value="UniProtKB-KW"/>
</dbReference>
<dbReference type="GO" id="GO:0016226">
    <property type="term" value="P:iron-sulfur cluster assembly"/>
    <property type="evidence" value="ECO:0007669"/>
    <property type="project" value="UniProtKB-UniRule"/>
</dbReference>
<dbReference type="FunFam" id="3.40.50.11000:FF:000001">
    <property type="entry name" value="Fe-S cluster assembly protein DRE2"/>
    <property type="match status" value="1"/>
</dbReference>
<dbReference type="Gene3D" id="3.40.50.11000">
    <property type="entry name" value="Fe-S cluster assembly protein Dre2, N-terminal domain"/>
    <property type="match status" value="1"/>
</dbReference>
<dbReference type="HAMAP" id="MF_03115">
    <property type="entry name" value="Anamorsin"/>
    <property type="match status" value="1"/>
</dbReference>
<dbReference type="InterPro" id="IPR007785">
    <property type="entry name" value="Anamorsin"/>
</dbReference>
<dbReference type="InterPro" id="IPR046408">
    <property type="entry name" value="CIAPIN1"/>
</dbReference>
<dbReference type="InterPro" id="IPR031838">
    <property type="entry name" value="Dre2_N"/>
</dbReference>
<dbReference type="PANTHER" id="PTHR13273">
    <property type="entry name" value="ANAMORSIN"/>
    <property type="match status" value="1"/>
</dbReference>
<dbReference type="PANTHER" id="PTHR13273:SF14">
    <property type="entry name" value="ANAMORSIN"/>
    <property type="match status" value="1"/>
</dbReference>
<dbReference type="Pfam" id="PF05093">
    <property type="entry name" value="CIAPIN1"/>
    <property type="match status" value="1"/>
</dbReference>
<dbReference type="Pfam" id="PF16803">
    <property type="entry name" value="DRE2_N"/>
    <property type="match status" value="1"/>
</dbReference>
<reference key="1">
    <citation type="journal article" date="2009" name="Genome Res.">
        <title>Genome structure of a Saccharomyces cerevisiae strain widely used in bioethanol production.</title>
        <authorList>
            <person name="Argueso J.L."/>
            <person name="Carazzolle M.F."/>
            <person name="Mieczkowski P.A."/>
            <person name="Duarte F.M."/>
            <person name="Netto O.V.C."/>
            <person name="Missawa S.K."/>
            <person name="Galzerani F."/>
            <person name="Costa G.G.L."/>
            <person name="Vidal R.O."/>
            <person name="Noronha M.F."/>
            <person name="Dominska M."/>
            <person name="Andrietta M.G.S."/>
            <person name="Andrietta S.R."/>
            <person name="Cunha A.F."/>
            <person name="Gomes L.H."/>
            <person name="Tavares F.C.A."/>
            <person name="Alcarde A.R."/>
            <person name="Dietrich F.S."/>
            <person name="McCusker J.H."/>
            <person name="Petes T.D."/>
            <person name="Pereira G.A.G."/>
        </authorList>
    </citation>
    <scope>NUCLEOTIDE SEQUENCE [LARGE SCALE GENOMIC DNA]</scope>
    <source>
        <strain>JAY291</strain>
    </source>
</reference>
<keyword id="KW-0001">2Fe-2S</keyword>
<keyword id="KW-0004">4Fe-4S</keyword>
<keyword id="KW-0963">Cytoplasm</keyword>
<keyword id="KW-0408">Iron</keyword>
<keyword id="KW-0411">Iron-sulfur</keyword>
<keyword id="KW-0479">Metal-binding</keyword>
<keyword id="KW-0496">Mitochondrion</keyword>
<keyword id="KW-0597">Phosphoprotein</keyword>
<name>DRE2_YEAS2</name>